<comment type="function">
    <text evidence="1">Binds together with bS18 to 16S ribosomal RNA.</text>
</comment>
<comment type="similarity">
    <text evidence="1">Belongs to the bacterial ribosomal protein bS6 family.</text>
</comment>
<dbReference type="EMBL" id="CU928162">
    <property type="protein sequence ID" value="CAR11005.1"/>
    <property type="molecule type" value="Genomic_DNA"/>
</dbReference>
<dbReference type="RefSeq" id="WP_001216676.1">
    <property type="nucleotide sequence ID" value="NC_011745.1"/>
</dbReference>
<dbReference type="SMR" id="B7MST0"/>
<dbReference type="GeneID" id="93777623"/>
<dbReference type="KEGG" id="ecq:ECED1_5050"/>
<dbReference type="HOGENOM" id="CLU_113441_6_1_6"/>
<dbReference type="Proteomes" id="UP000000748">
    <property type="component" value="Chromosome"/>
</dbReference>
<dbReference type="GO" id="GO:0022627">
    <property type="term" value="C:cytosolic small ribosomal subunit"/>
    <property type="evidence" value="ECO:0007669"/>
    <property type="project" value="TreeGrafter"/>
</dbReference>
<dbReference type="GO" id="GO:0070181">
    <property type="term" value="F:small ribosomal subunit rRNA binding"/>
    <property type="evidence" value="ECO:0007669"/>
    <property type="project" value="TreeGrafter"/>
</dbReference>
<dbReference type="GO" id="GO:0003735">
    <property type="term" value="F:structural constituent of ribosome"/>
    <property type="evidence" value="ECO:0007669"/>
    <property type="project" value="InterPro"/>
</dbReference>
<dbReference type="GO" id="GO:0006412">
    <property type="term" value="P:translation"/>
    <property type="evidence" value="ECO:0007669"/>
    <property type="project" value="UniProtKB-UniRule"/>
</dbReference>
<dbReference type="CDD" id="cd00473">
    <property type="entry name" value="bS6"/>
    <property type="match status" value="1"/>
</dbReference>
<dbReference type="FunFam" id="3.30.70.60:FF:000003">
    <property type="entry name" value="30S ribosomal protein S6"/>
    <property type="match status" value="1"/>
</dbReference>
<dbReference type="Gene3D" id="3.30.70.60">
    <property type="match status" value="1"/>
</dbReference>
<dbReference type="HAMAP" id="MF_00360">
    <property type="entry name" value="Ribosomal_bS6"/>
    <property type="match status" value="1"/>
</dbReference>
<dbReference type="InterPro" id="IPR000529">
    <property type="entry name" value="Ribosomal_bS6"/>
</dbReference>
<dbReference type="InterPro" id="IPR020815">
    <property type="entry name" value="Ribosomal_bS6_CS"/>
</dbReference>
<dbReference type="InterPro" id="IPR035980">
    <property type="entry name" value="Ribosomal_bS6_sf"/>
</dbReference>
<dbReference type="InterPro" id="IPR020814">
    <property type="entry name" value="Ribosomal_S6_plastid/chlpt"/>
</dbReference>
<dbReference type="InterPro" id="IPR014717">
    <property type="entry name" value="Transl_elong_EF1B/ribsomal_bS6"/>
</dbReference>
<dbReference type="NCBIfam" id="TIGR00166">
    <property type="entry name" value="S6"/>
    <property type="match status" value="1"/>
</dbReference>
<dbReference type="PANTHER" id="PTHR21011">
    <property type="entry name" value="MITOCHONDRIAL 28S RIBOSOMAL PROTEIN S6"/>
    <property type="match status" value="1"/>
</dbReference>
<dbReference type="PANTHER" id="PTHR21011:SF1">
    <property type="entry name" value="SMALL RIBOSOMAL SUBUNIT PROTEIN BS6M"/>
    <property type="match status" value="1"/>
</dbReference>
<dbReference type="Pfam" id="PF01250">
    <property type="entry name" value="Ribosomal_S6"/>
    <property type="match status" value="1"/>
</dbReference>
<dbReference type="SUPFAM" id="SSF54995">
    <property type="entry name" value="Ribosomal protein S6"/>
    <property type="match status" value="1"/>
</dbReference>
<dbReference type="PROSITE" id="PS01048">
    <property type="entry name" value="RIBOSOMAL_S6"/>
    <property type="match status" value="1"/>
</dbReference>
<keyword id="KW-0007">Acetylation</keyword>
<keyword id="KW-0687">Ribonucleoprotein</keyword>
<keyword id="KW-0689">Ribosomal protein</keyword>
<keyword id="KW-0694">RNA-binding</keyword>
<keyword id="KW-0699">rRNA-binding</keyword>
<sequence>MRHYEIVFMVHPDQSEQVPGMIERYTAAITGAEGKIHRLEDWGRRQLAYPINKLHKAHYVLMNVEAPQEVIDELETTFRFNDAVIRSMVMRTKHAVTEASPMVKAKDERRERRDDFANETADDAEAGDSEE</sequence>
<protein>
    <recommendedName>
        <fullName evidence="1">Small ribosomal subunit protein bS6</fullName>
    </recommendedName>
    <alternativeName>
        <fullName evidence="3">30S ribosomal protein S6</fullName>
    </alternativeName>
</protein>
<evidence type="ECO:0000255" key="1">
    <source>
        <dbReference type="HAMAP-Rule" id="MF_00360"/>
    </source>
</evidence>
<evidence type="ECO:0000256" key="2">
    <source>
        <dbReference type="SAM" id="MobiDB-lite"/>
    </source>
</evidence>
<evidence type="ECO:0000305" key="3"/>
<gene>
    <name evidence="1" type="primary">rpsF</name>
    <name type="ordered locus">ECED1_5050</name>
</gene>
<reference key="1">
    <citation type="journal article" date="2009" name="PLoS Genet.">
        <title>Organised genome dynamics in the Escherichia coli species results in highly diverse adaptive paths.</title>
        <authorList>
            <person name="Touchon M."/>
            <person name="Hoede C."/>
            <person name="Tenaillon O."/>
            <person name="Barbe V."/>
            <person name="Baeriswyl S."/>
            <person name="Bidet P."/>
            <person name="Bingen E."/>
            <person name="Bonacorsi S."/>
            <person name="Bouchier C."/>
            <person name="Bouvet O."/>
            <person name="Calteau A."/>
            <person name="Chiapello H."/>
            <person name="Clermont O."/>
            <person name="Cruveiller S."/>
            <person name="Danchin A."/>
            <person name="Diard M."/>
            <person name="Dossat C."/>
            <person name="Karoui M.E."/>
            <person name="Frapy E."/>
            <person name="Garry L."/>
            <person name="Ghigo J.M."/>
            <person name="Gilles A.M."/>
            <person name="Johnson J."/>
            <person name="Le Bouguenec C."/>
            <person name="Lescat M."/>
            <person name="Mangenot S."/>
            <person name="Martinez-Jehanne V."/>
            <person name="Matic I."/>
            <person name="Nassif X."/>
            <person name="Oztas S."/>
            <person name="Petit M.A."/>
            <person name="Pichon C."/>
            <person name="Rouy Z."/>
            <person name="Ruf C.S."/>
            <person name="Schneider D."/>
            <person name="Tourret J."/>
            <person name="Vacherie B."/>
            <person name="Vallenet D."/>
            <person name="Medigue C."/>
            <person name="Rocha E.P.C."/>
            <person name="Denamur E."/>
        </authorList>
    </citation>
    <scope>NUCLEOTIDE SEQUENCE [LARGE SCALE GENOMIC DNA]</scope>
    <source>
        <strain>ED1a</strain>
    </source>
</reference>
<proteinExistence type="inferred from homology"/>
<name>RS6_ECO81</name>
<organism>
    <name type="scientific">Escherichia coli O81 (strain ED1a)</name>
    <dbReference type="NCBI Taxonomy" id="585397"/>
    <lineage>
        <taxon>Bacteria</taxon>
        <taxon>Pseudomonadati</taxon>
        <taxon>Pseudomonadota</taxon>
        <taxon>Gammaproteobacteria</taxon>
        <taxon>Enterobacterales</taxon>
        <taxon>Enterobacteriaceae</taxon>
        <taxon>Escherichia</taxon>
    </lineage>
</organism>
<feature type="chain" id="PRO_1000133529" description="Small ribosomal subunit protein bS6">
    <location>
        <begin position="1"/>
        <end position="131"/>
    </location>
</feature>
<feature type="region of interest" description="Disordered" evidence="2">
    <location>
        <begin position="98"/>
        <end position="131"/>
    </location>
</feature>
<feature type="compositionally biased region" description="Basic and acidic residues" evidence="2">
    <location>
        <begin position="104"/>
        <end position="116"/>
    </location>
</feature>
<feature type="compositionally biased region" description="Acidic residues" evidence="2">
    <location>
        <begin position="120"/>
        <end position="131"/>
    </location>
</feature>
<feature type="modified residue" description="N6-acetyllysine" evidence="1">
    <location>
        <position position="93"/>
    </location>
</feature>
<accession>B7MST0</accession>